<sequence>MSLLLTLIALLVSLLLFMARRRHGYWQRRGIPHDVPHPIYGNMKDWPKKRHIAMIFRDYYTKYKRSVYPFAGFYFFFTRSAVITDLELVKRVLIKDFNHFENRGIFYNEIDDPLSATLFSIEGQKWRHLRHKLTPTFTSGKMKNMFPIIVKVGEEMEKIFSAKTTTGEGQVLEIVDLVARYTADVIGNCAFGLNCNSLQNPNAEFVTIGKRAIIERRYGGLLDFLIFGFPKLSRRLRLKLNVQDVEDFYTSIVRNTIDYRLRTNEKRHDFMDSLIEMYEKEQAGNTEDGLSFNEILAQAFIFFVAGFETSSTTMGFALYELALDQDIQDQLRAEINNVLSKHNNEFTYEGIKEMKYLEQVVMETLRKYPVLAHLTRMTQTDFSPEDPKYFIAKGTTVVIPALGIHYDPEIYPEPEKFKPERFTDEAIAARPSCTWLPFGEGPRNCIGLRFGLMQACVGLAYLIRGYKFSVSTETQIPMKFVVKSILLSAENGIHLKVEKLSK</sequence>
<name>C6A23_DROME</name>
<gene>
    <name type="primary">Cyp6a23</name>
    <name type="ORF">CG10242</name>
</gene>
<evidence type="ECO:0000250" key="1"/>
<evidence type="ECO:0000305" key="2"/>
<proteinExistence type="evidence at transcript level"/>
<organism>
    <name type="scientific">Drosophila melanogaster</name>
    <name type="common">Fruit fly</name>
    <dbReference type="NCBI Taxonomy" id="7227"/>
    <lineage>
        <taxon>Eukaryota</taxon>
        <taxon>Metazoa</taxon>
        <taxon>Ecdysozoa</taxon>
        <taxon>Arthropoda</taxon>
        <taxon>Hexapoda</taxon>
        <taxon>Insecta</taxon>
        <taxon>Pterygota</taxon>
        <taxon>Neoptera</taxon>
        <taxon>Endopterygota</taxon>
        <taxon>Diptera</taxon>
        <taxon>Brachycera</taxon>
        <taxon>Muscomorpha</taxon>
        <taxon>Ephydroidea</taxon>
        <taxon>Drosophilidae</taxon>
        <taxon>Drosophila</taxon>
        <taxon>Sophophora</taxon>
    </lineage>
</organism>
<reference key="1">
    <citation type="journal article" date="2000" name="Science">
        <title>The genome sequence of Drosophila melanogaster.</title>
        <authorList>
            <person name="Adams M.D."/>
            <person name="Celniker S.E."/>
            <person name="Holt R.A."/>
            <person name="Evans C.A."/>
            <person name="Gocayne J.D."/>
            <person name="Amanatides P.G."/>
            <person name="Scherer S.E."/>
            <person name="Li P.W."/>
            <person name="Hoskins R.A."/>
            <person name="Galle R.F."/>
            <person name="George R.A."/>
            <person name="Lewis S.E."/>
            <person name="Richards S."/>
            <person name="Ashburner M."/>
            <person name="Henderson S.N."/>
            <person name="Sutton G.G."/>
            <person name="Wortman J.R."/>
            <person name="Yandell M.D."/>
            <person name="Zhang Q."/>
            <person name="Chen L.X."/>
            <person name="Brandon R.C."/>
            <person name="Rogers Y.-H.C."/>
            <person name="Blazej R.G."/>
            <person name="Champe M."/>
            <person name="Pfeiffer B.D."/>
            <person name="Wan K.H."/>
            <person name="Doyle C."/>
            <person name="Baxter E.G."/>
            <person name="Helt G."/>
            <person name="Nelson C.R."/>
            <person name="Miklos G.L.G."/>
            <person name="Abril J.F."/>
            <person name="Agbayani A."/>
            <person name="An H.-J."/>
            <person name="Andrews-Pfannkoch C."/>
            <person name="Baldwin D."/>
            <person name="Ballew R.M."/>
            <person name="Basu A."/>
            <person name="Baxendale J."/>
            <person name="Bayraktaroglu L."/>
            <person name="Beasley E.M."/>
            <person name="Beeson K.Y."/>
            <person name="Benos P.V."/>
            <person name="Berman B.P."/>
            <person name="Bhandari D."/>
            <person name="Bolshakov S."/>
            <person name="Borkova D."/>
            <person name="Botchan M.R."/>
            <person name="Bouck J."/>
            <person name="Brokstein P."/>
            <person name="Brottier P."/>
            <person name="Burtis K.C."/>
            <person name="Busam D.A."/>
            <person name="Butler H."/>
            <person name="Cadieu E."/>
            <person name="Center A."/>
            <person name="Chandra I."/>
            <person name="Cherry J.M."/>
            <person name="Cawley S."/>
            <person name="Dahlke C."/>
            <person name="Davenport L.B."/>
            <person name="Davies P."/>
            <person name="de Pablos B."/>
            <person name="Delcher A."/>
            <person name="Deng Z."/>
            <person name="Mays A.D."/>
            <person name="Dew I."/>
            <person name="Dietz S.M."/>
            <person name="Dodson K."/>
            <person name="Doup L.E."/>
            <person name="Downes M."/>
            <person name="Dugan-Rocha S."/>
            <person name="Dunkov B.C."/>
            <person name="Dunn P."/>
            <person name="Durbin K.J."/>
            <person name="Evangelista C.C."/>
            <person name="Ferraz C."/>
            <person name="Ferriera S."/>
            <person name="Fleischmann W."/>
            <person name="Fosler C."/>
            <person name="Gabrielian A.E."/>
            <person name="Garg N.S."/>
            <person name="Gelbart W.M."/>
            <person name="Glasser K."/>
            <person name="Glodek A."/>
            <person name="Gong F."/>
            <person name="Gorrell J.H."/>
            <person name="Gu Z."/>
            <person name="Guan P."/>
            <person name="Harris M."/>
            <person name="Harris N.L."/>
            <person name="Harvey D.A."/>
            <person name="Heiman T.J."/>
            <person name="Hernandez J.R."/>
            <person name="Houck J."/>
            <person name="Hostin D."/>
            <person name="Houston K.A."/>
            <person name="Howland T.J."/>
            <person name="Wei M.-H."/>
            <person name="Ibegwam C."/>
            <person name="Jalali M."/>
            <person name="Kalush F."/>
            <person name="Karpen G.H."/>
            <person name="Ke Z."/>
            <person name="Kennison J.A."/>
            <person name="Ketchum K.A."/>
            <person name="Kimmel B.E."/>
            <person name="Kodira C.D."/>
            <person name="Kraft C.L."/>
            <person name="Kravitz S."/>
            <person name="Kulp D."/>
            <person name="Lai Z."/>
            <person name="Lasko P."/>
            <person name="Lei Y."/>
            <person name="Levitsky A.A."/>
            <person name="Li J.H."/>
            <person name="Li Z."/>
            <person name="Liang Y."/>
            <person name="Lin X."/>
            <person name="Liu X."/>
            <person name="Mattei B."/>
            <person name="McIntosh T.C."/>
            <person name="McLeod M.P."/>
            <person name="McPherson D."/>
            <person name="Merkulov G."/>
            <person name="Milshina N.V."/>
            <person name="Mobarry C."/>
            <person name="Morris J."/>
            <person name="Moshrefi A."/>
            <person name="Mount S.M."/>
            <person name="Moy M."/>
            <person name="Murphy B."/>
            <person name="Murphy L."/>
            <person name="Muzny D.M."/>
            <person name="Nelson D.L."/>
            <person name="Nelson D.R."/>
            <person name="Nelson K.A."/>
            <person name="Nixon K."/>
            <person name="Nusskern D.R."/>
            <person name="Pacleb J.M."/>
            <person name="Palazzolo M."/>
            <person name="Pittman G.S."/>
            <person name="Pan S."/>
            <person name="Pollard J."/>
            <person name="Puri V."/>
            <person name="Reese M.G."/>
            <person name="Reinert K."/>
            <person name="Remington K."/>
            <person name="Saunders R.D.C."/>
            <person name="Scheeler F."/>
            <person name="Shen H."/>
            <person name="Shue B.C."/>
            <person name="Siden-Kiamos I."/>
            <person name="Simpson M."/>
            <person name="Skupski M.P."/>
            <person name="Smith T.J."/>
            <person name="Spier E."/>
            <person name="Spradling A.C."/>
            <person name="Stapleton M."/>
            <person name="Strong R."/>
            <person name="Sun E."/>
            <person name="Svirskas R."/>
            <person name="Tector C."/>
            <person name="Turner R."/>
            <person name="Venter E."/>
            <person name="Wang A.H."/>
            <person name="Wang X."/>
            <person name="Wang Z.-Y."/>
            <person name="Wassarman D.A."/>
            <person name="Weinstock G.M."/>
            <person name="Weissenbach J."/>
            <person name="Williams S.M."/>
            <person name="Woodage T."/>
            <person name="Worley K.C."/>
            <person name="Wu D."/>
            <person name="Yang S."/>
            <person name="Yao Q.A."/>
            <person name="Ye J."/>
            <person name="Yeh R.-F."/>
            <person name="Zaveri J.S."/>
            <person name="Zhan M."/>
            <person name="Zhang G."/>
            <person name="Zhao Q."/>
            <person name="Zheng L."/>
            <person name="Zheng X.H."/>
            <person name="Zhong F.N."/>
            <person name="Zhong W."/>
            <person name="Zhou X."/>
            <person name="Zhu S.C."/>
            <person name="Zhu X."/>
            <person name="Smith H.O."/>
            <person name="Gibbs R.A."/>
            <person name="Myers E.W."/>
            <person name="Rubin G.M."/>
            <person name="Venter J.C."/>
        </authorList>
    </citation>
    <scope>NUCLEOTIDE SEQUENCE [LARGE SCALE GENOMIC DNA]</scope>
    <source>
        <strain>Berkeley</strain>
    </source>
</reference>
<reference key="2">
    <citation type="journal article" date="2002" name="Genome Biol.">
        <title>Annotation of the Drosophila melanogaster euchromatic genome: a systematic review.</title>
        <authorList>
            <person name="Misra S."/>
            <person name="Crosby M.A."/>
            <person name="Mungall C.J."/>
            <person name="Matthews B.B."/>
            <person name="Campbell K.S."/>
            <person name="Hradecky P."/>
            <person name="Huang Y."/>
            <person name="Kaminker J.S."/>
            <person name="Millburn G.H."/>
            <person name="Prochnik S.E."/>
            <person name="Smith C.D."/>
            <person name="Tupy J.L."/>
            <person name="Whitfield E.J."/>
            <person name="Bayraktaroglu L."/>
            <person name="Berman B.P."/>
            <person name="Bettencourt B.R."/>
            <person name="Celniker S.E."/>
            <person name="de Grey A.D.N.J."/>
            <person name="Drysdale R.A."/>
            <person name="Harris N.L."/>
            <person name="Richter J."/>
            <person name="Russo S."/>
            <person name="Schroeder A.J."/>
            <person name="Shu S.Q."/>
            <person name="Stapleton M."/>
            <person name="Yamada C."/>
            <person name="Ashburner M."/>
            <person name="Gelbart W.M."/>
            <person name="Rubin G.M."/>
            <person name="Lewis S.E."/>
        </authorList>
    </citation>
    <scope>GENOME REANNOTATION</scope>
    <source>
        <strain>Berkeley</strain>
    </source>
</reference>
<reference key="3">
    <citation type="journal article" date="2002" name="Genome Biol.">
        <title>A Drosophila full-length cDNA resource.</title>
        <authorList>
            <person name="Stapleton M."/>
            <person name="Carlson J.W."/>
            <person name="Brokstein P."/>
            <person name="Yu C."/>
            <person name="Champe M."/>
            <person name="George R.A."/>
            <person name="Guarin H."/>
            <person name="Kronmiller B."/>
            <person name="Pacleb J.M."/>
            <person name="Park S."/>
            <person name="Wan K.H."/>
            <person name="Rubin G.M."/>
            <person name="Celniker S.E."/>
        </authorList>
    </citation>
    <scope>NUCLEOTIDE SEQUENCE [LARGE SCALE MRNA]</scope>
    <source>
        <strain>Berkeley</strain>
        <tissue>Embryo</tissue>
    </source>
</reference>
<dbReference type="EC" id="1.14.-.-"/>
<dbReference type="EMBL" id="AE013599">
    <property type="protein sequence ID" value="AAF58189.2"/>
    <property type="molecule type" value="Genomic_DNA"/>
</dbReference>
<dbReference type="EMBL" id="AY071596">
    <property type="protein sequence ID" value="AAL49218.1"/>
    <property type="molecule type" value="mRNA"/>
</dbReference>
<dbReference type="RefSeq" id="NP_611000.2">
    <property type="nucleotide sequence ID" value="NM_137156.3"/>
</dbReference>
<dbReference type="SMR" id="Q9V771"/>
<dbReference type="BioGRID" id="62403">
    <property type="interactions" value="3"/>
</dbReference>
<dbReference type="DIP" id="DIP-17728N"/>
<dbReference type="FunCoup" id="Q9V771">
    <property type="interactions" value="26"/>
</dbReference>
<dbReference type="IntAct" id="Q9V771">
    <property type="interactions" value="1"/>
</dbReference>
<dbReference type="STRING" id="7227.FBpp0086582"/>
<dbReference type="PaxDb" id="7227-FBpp0086582"/>
<dbReference type="DNASU" id="36661"/>
<dbReference type="EnsemblMetazoa" id="FBtr0087452">
    <property type="protein sequence ID" value="FBpp0086582"/>
    <property type="gene ID" value="FBgn0033978"/>
</dbReference>
<dbReference type="GeneID" id="36661"/>
<dbReference type="KEGG" id="dme:Dmel_CG10242"/>
<dbReference type="UCSC" id="CG10242-RA">
    <property type="organism name" value="d. melanogaster"/>
</dbReference>
<dbReference type="AGR" id="FB:FBgn0033978"/>
<dbReference type="CTD" id="36661"/>
<dbReference type="FlyBase" id="FBgn0033978">
    <property type="gene designation" value="Cyp6a23"/>
</dbReference>
<dbReference type="VEuPathDB" id="VectorBase:FBgn0033978"/>
<dbReference type="eggNOG" id="KOG0158">
    <property type="taxonomic scope" value="Eukaryota"/>
</dbReference>
<dbReference type="GeneTree" id="ENSGT00940000165972"/>
<dbReference type="HOGENOM" id="CLU_001570_5_2_1"/>
<dbReference type="InParanoid" id="Q9V771"/>
<dbReference type="OMA" id="CITWFGT"/>
<dbReference type="OrthoDB" id="2789670at2759"/>
<dbReference type="PhylomeDB" id="Q9V771"/>
<dbReference type="BioGRID-ORCS" id="36661">
    <property type="hits" value="0 hits in 3 CRISPR screens"/>
</dbReference>
<dbReference type="GenomeRNAi" id="36661"/>
<dbReference type="PRO" id="PR:Q9V771"/>
<dbReference type="Proteomes" id="UP000000803">
    <property type="component" value="Chromosome 2R"/>
</dbReference>
<dbReference type="Bgee" id="FBgn0033978">
    <property type="expression patterns" value="Expressed in enterocyte of anterior adult midgut epithelium in digestive tract and 101 other cell types or tissues"/>
</dbReference>
<dbReference type="ExpressionAtlas" id="Q9V771">
    <property type="expression patterns" value="baseline and differential"/>
</dbReference>
<dbReference type="GO" id="GO:0005789">
    <property type="term" value="C:endoplasmic reticulum membrane"/>
    <property type="evidence" value="ECO:0007669"/>
    <property type="project" value="UniProtKB-SubCell"/>
</dbReference>
<dbReference type="GO" id="GO:0020037">
    <property type="term" value="F:heme binding"/>
    <property type="evidence" value="ECO:0007669"/>
    <property type="project" value="InterPro"/>
</dbReference>
<dbReference type="GO" id="GO:0005506">
    <property type="term" value="F:iron ion binding"/>
    <property type="evidence" value="ECO:0007669"/>
    <property type="project" value="InterPro"/>
</dbReference>
<dbReference type="GO" id="GO:0004497">
    <property type="term" value="F:monooxygenase activity"/>
    <property type="evidence" value="ECO:0007669"/>
    <property type="project" value="UniProtKB-KW"/>
</dbReference>
<dbReference type="GO" id="GO:0016705">
    <property type="term" value="F:oxidoreductase activity, acting on paired donors, with incorporation or reduction of molecular oxygen"/>
    <property type="evidence" value="ECO:0007669"/>
    <property type="project" value="InterPro"/>
</dbReference>
<dbReference type="CDD" id="cd11056">
    <property type="entry name" value="CYP6-like"/>
    <property type="match status" value="1"/>
</dbReference>
<dbReference type="FunFam" id="1.10.630.10:FF:000042">
    <property type="entry name" value="Cytochrome P450"/>
    <property type="match status" value="1"/>
</dbReference>
<dbReference type="Gene3D" id="1.10.630.10">
    <property type="entry name" value="Cytochrome P450"/>
    <property type="match status" value="1"/>
</dbReference>
<dbReference type="InterPro" id="IPR001128">
    <property type="entry name" value="Cyt_P450"/>
</dbReference>
<dbReference type="InterPro" id="IPR017972">
    <property type="entry name" value="Cyt_P450_CS"/>
</dbReference>
<dbReference type="InterPro" id="IPR002401">
    <property type="entry name" value="Cyt_P450_E_grp-I"/>
</dbReference>
<dbReference type="InterPro" id="IPR036396">
    <property type="entry name" value="Cyt_P450_sf"/>
</dbReference>
<dbReference type="InterPro" id="IPR050476">
    <property type="entry name" value="Insect_CytP450_Detox"/>
</dbReference>
<dbReference type="PANTHER" id="PTHR24292">
    <property type="entry name" value="CYTOCHROME P450"/>
    <property type="match status" value="1"/>
</dbReference>
<dbReference type="PANTHER" id="PTHR24292:SF100">
    <property type="entry name" value="CYTOCHROME P450 6A16, ISOFORM B-RELATED"/>
    <property type="match status" value="1"/>
</dbReference>
<dbReference type="Pfam" id="PF00067">
    <property type="entry name" value="p450"/>
    <property type="match status" value="1"/>
</dbReference>
<dbReference type="PRINTS" id="PR00463">
    <property type="entry name" value="EP450I"/>
</dbReference>
<dbReference type="PRINTS" id="PR00385">
    <property type="entry name" value="P450"/>
</dbReference>
<dbReference type="SUPFAM" id="SSF48264">
    <property type="entry name" value="Cytochrome P450"/>
    <property type="match status" value="1"/>
</dbReference>
<dbReference type="PROSITE" id="PS00086">
    <property type="entry name" value="CYTOCHROME_P450"/>
    <property type="match status" value="1"/>
</dbReference>
<protein>
    <recommendedName>
        <fullName>Probable cytochrome P450 6a23</fullName>
        <ecNumber>1.14.-.-</ecNumber>
    </recommendedName>
    <alternativeName>
        <fullName>CYPVIA23</fullName>
    </alternativeName>
</protein>
<comment type="function">
    <text evidence="1">May be involved in the metabolism of insect hormones and in the breakdown of synthetic insecticides.</text>
</comment>
<comment type="cofactor">
    <cofactor evidence="1">
        <name>heme</name>
        <dbReference type="ChEBI" id="CHEBI:30413"/>
    </cofactor>
</comment>
<comment type="subcellular location">
    <subcellularLocation>
        <location evidence="2">Endoplasmic reticulum membrane</location>
        <topology evidence="2">Peripheral membrane protein</topology>
    </subcellularLocation>
    <subcellularLocation>
        <location evidence="2">Microsome membrane</location>
        <topology evidence="2">Peripheral membrane protein</topology>
    </subcellularLocation>
</comment>
<comment type="similarity">
    <text evidence="2">Belongs to the cytochrome P450 family.</text>
</comment>
<keyword id="KW-0256">Endoplasmic reticulum</keyword>
<keyword id="KW-0349">Heme</keyword>
<keyword id="KW-0408">Iron</keyword>
<keyword id="KW-0472">Membrane</keyword>
<keyword id="KW-0479">Metal-binding</keyword>
<keyword id="KW-0492">Microsome</keyword>
<keyword id="KW-0503">Monooxygenase</keyword>
<keyword id="KW-0560">Oxidoreductase</keyword>
<keyword id="KW-1185">Reference proteome</keyword>
<feature type="chain" id="PRO_0000051877" description="Probable cytochrome P450 6a23">
    <location>
        <begin position="1"/>
        <end position="502"/>
    </location>
</feature>
<feature type="binding site" description="axial binding residue" evidence="1">
    <location>
        <position position="445"/>
    </location>
    <ligand>
        <name>heme</name>
        <dbReference type="ChEBI" id="CHEBI:30413"/>
    </ligand>
    <ligandPart>
        <name>Fe</name>
        <dbReference type="ChEBI" id="CHEBI:18248"/>
    </ligandPart>
</feature>
<feature type="sequence conflict" description="In Ref. 3; AAL49218." evidence="2" ref="3">
    <original>A</original>
    <variation>D</variation>
    <location>
        <position position="283"/>
    </location>
</feature>
<accession>Q9V771</accession>
<accession>Q8SYE8</accession>